<protein>
    <recommendedName>
        <fullName evidence="1">Urease accessory protein UreF</fullName>
    </recommendedName>
</protein>
<dbReference type="EMBL" id="CP000016">
    <property type="protein sequence ID" value="AAZ41151.1"/>
    <property type="molecule type" value="Genomic_DNA"/>
</dbReference>
<dbReference type="RefSeq" id="WP_011283062.1">
    <property type="nucleotide sequence ID" value="NC_007292.1"/>
</dbReference>
<dbReference type="SMR" id="Q492F0"/>
<dbReference type="STRING" id="291272.BPEN_541"/>
<dbReference type="KEGG" id="bpn:BPEN_541"/>
<dbReference type="eggNOG" id="COG0830">
    <property type="taxonomic scope" value="Bacteria"/>
</dbReference>
<dbReference type="HOGENOM" id="CLU_049215_2_1_6"/>
<dbReference type="OrthoDB" id="9798772at2"/>
<dbReference type="Proteomes" id="UP000007794">
    <property type="component" value="Chromosome"/>
</dbReference>
<dbReference type="GO" id="GO:0005737">
    <property type="term" value="C:cytoplasm"/>
    <property type="evidence" value="ECO:0007669"/>
    <property type="project" value="UniProtKB-SubCell"/>
</dbReference>
<dbReference type="GO" id="GO:0016151">
    <property type="term" value="F:nickel cation binding"/>
    <property type="evidence" value="ECO:0007669"/>
    <property type="project" value="UniProtKB-UniRule"/>
</dbReference>
<dbReference type="Gene3D" id="1.10.4190.10">
    <property type="entry name" value="Urease accessory protein UreF"/>
    <property type="match status" value="1"/>
</dbReference>
<dbReference type="HAMAP" id="MF_01385">
    <property type="entry name" value="UreF"/>
    <property type="match status" value="1"/>
</dbReference>
<dbReference type="InterPro" id="IPR002639">
    <property type="entry name" value="UreF"/>
</dbReference>
<dbReference type="InterPro" id="IPR038277">
    <property type="entry name" value="UreF_sf"/>
</dbReference>
<dbReference type="PANTHER" id="PTHR33620">
    <property type="entry name" value="UREASE ACCESSORY PROTEIN F"/>
    <property type="match status" value="1"/>
</dbReference>
<dbReference type="PANTHER" id="PTHR33620:SF1">
    <property type="entry name" value="UREASE ACCESSORY PROTEIN F"/>
    <property type="match status" value="1"/>
</dbReference>
<dbReference type="Pfam" id="PF01730">
    <property type="entry name" value="UreF"/>
    <property type="match status" value="1"/>
</dbReference>
<dbReference type="PIRSF" id="PIRSF009467">
    <property type="entry name" value="Ureas_acces_UreF"/>
    <property type="match status" value="1"/>
</dbReference>
<keyword id="KW-0143">Chaperone</keyword>
<keyword id="KW-0963">Cytoplasm</keyword>
<keyword id="KW-0996">Nickel insertion</keyword>
<keyword id="KW-1185">Reference proteome</keyword>
<feature type="chain" id="PRO_0000344077" description="Urease accessory protein UreF">
    <location>
        <begin position="1"/>
        <end position="228"/>
    </location>
</feature>
<proteinExistence type="inferred from homology"/>
<reference key="1">
    <citation type="journal article" date="2005" name="Genome Res.">
        <title>Genome sequence of Blochmannia pennsylvanicus indicates parallel evolutionary trends among bacterial mutualists of insects.</title>
        <authorList>
            <person name="Degnan P.H."/>
            <person name="Lazarus A.B."/>
            <person name="Wernegreen J.J."/>
        </authorList>
    </citation>
    <scope>NUCLEOTIDE SEQUENCE [LARGE SCALE GENOMIC DNA]</scope>
    <source>
        <strain>BPEN</strain>
    </source>
</reference>
<organism>
    <name type="scientific">Blochmanniella pennsylvanica (strain BPEN)</name>
    <dbReference type="NCBI Taxonomy" id="291272"/>
    <lineage>
        <taxon>Bacteria</taxon>
        <taxon>Pseudomonadati</taxon>
        <taxon>Pseudomonadota</taxon>
        <taxon>Gammaproteobacteria</taxon>
        <taxon>Enterobacterales</taxon>
        <taxon>Enterobacteriaceae</taxon>
        <taxon>ant endosymbionts</taxon>
        <taxon>Candidatus Blochmanniella</taxon>
    </lineage>
</organism>
<sequence>MCADHGISSVLSLMQLVSSNFPVGSFAYSRGLEWAVENNWVNSVETFYSWQQQWIDGPLIYLEWPMLKRCYYYAQIRDEMNFFQCALRILSYRDTHELRLEERQRGKALSRIILQWYPFTDGGTWLSALEHSGLASIAWLGYTWSISLENLALGYAYNMLESATMAGLKLVPFGQITAQRLLRSLMERLPNDWKKSDMIADHELGNGFLLQSIASSCHETQYSRLFRS</sequence>
<accession>Q492F0</accession>
<name>UREF_BLOPB</name>
<evidence type="ECO:0000255" key="1">
    <source>
        <dbReference type="HAMAP-Rule" id="MF_01385"/>
    </source>
</evidence>
<comment type="function">
    <text evidence="1">Required for maturation of urease via the functional incorporation of the urease nickel metallocenter.</text>
</comment>
<comment type="subunit">
    <text evidence="1">UreD, UreF and UreG form a complex that acts as a GTP-hydrolysis-dependent molecular chaperone, activating the urease apoprotein by helping to assemble the nickel containing metallocenter of UreC. The UreE protein probably delivers the nickel.</text>
</comment>
<comment type="subcellular location">
    <subcellularLocation>
        <location evidence="1">Cytoplasm</location>
    </subcellularLocation>
</comment>
<comment type="similarity">
    <text evidence="1">Belongs to the UreF family.</text>
</comment>
<gene>
    <name evidence="1" type="primary">ureF</name>
    <name type="ordered locus">BPEN_541</name>
</gene>